<proteinExistence type="inferred from homology"/>
<sequence>MGRLQRTLSNISEEEIDNGRIGIVAGAIEYPNQPALVGRAALRTGSDHVRALVADPIYEIVAGQDPNLLVDRYAGEQFEESAVERTREMSEWADALVIGPGLVDADPQAVCEAIDTIDVPMVVDALALEPSLDADLSNAVLTPSGAEVGPIRDEYGSLEAFSEETGAVITLTGDVDEIVADGERLENETGTSAMTVAGTGDTMVGIVASLLGQGMDRREAAELGAWILGKTGELATANHGPGVVATDVIERIPDTIR</sequence>
<gene>
    <name evidence="1" type="primary">nnrD</name>
    <name type="ordered locus">Htur_2808</name>
</gene>
<evidence type="ECO:0000255" key="1">
    <source>
        <dbReference type="HAMAP-Rule" id="MF_01965"/>
    </source>
</evidence>
<keyword id="KW-0067">ATP-binding</keyword>
<keyword id="KW-0456">Lyase</keyword>
<keyword id="KW-0520">NAD</keyword>
<keyword id="KW-0521">NADP</keyword>
<keyword id="KW-0547">Nucleotide-binding</keyword>
<dbReference type="EC" id="4.2.1.136" evidence="1"/>
<dbReference type="EMBL" id="CP001860">
    <property type="protein sequence ID" value="ADB61680.1"/>
    <property type="molecule type" value="Genomic_DNA"/>
</dbReference>
<dbReference type="RefSeq" id="WP_012943949.1">
    <property type="nucleotide sequence ID" value="NC_013743.1"/>
</dbReference>
<dbReference type="SMR" id="D2RXF6"/>
<dbReference type="STRING" id="543526.Htur_2808"/>
<dbReference type="GeneID" id="8743424"/>
<dbReference type="KEGG" id="htu:Htur_2808"/>
<dbReference type="eggNOG" id="arCOG00018">
    <property type="taxonomic scope" value="Archaea"/>
</dbReference>
<dbReference type="HOGENOM" id="CLU_1080123_0_0_2"/>
<dbReference type="OrthoDB" id="15148at2157"/>
<dbReference type="Proteomes" id="UP000001903">
    <property type="component" value="Chromosome"/>
</dbReference>
<dbReference type="GO" id="GO:0052855">
    <property type="term" value="F:ADP-dependent NAD(P)H-hydrate dehydratase activity"/>
    <property type="evidence" value="ECO:0007669"/>
    <property type="project" value="UniProtKB-UniRule"/>
</dbReference>
<dbReference type="GO" id="GO:0005524">
    <property type="term" value="F:ATP binding"/>
    <property type="evidence" value="ECO:0007669"/>
    <property type="project" value="UniProtKB-KW"/>
</dbReference>
<dbReference type="GO" id="GO:0110051">
    <property type="term" value="P:metabolite repair"/>
    <property type="evidence" value="ECO:0007669"/>
    <property type="project" value="TreeGrafter"/>
</dbReference>
<dbReference type="GO" id="GO:0046496">
    <property type="term" value="P:nicotinamide nucleotide metabolic process"/>
    <property type="evidence" value="ECO:0007669"/>
    <property type="project" value="UniProtKB-UniRule"/>
</dbReference>
<dbReference type="CDD" id="cd01171">
    <property type="entry name" value="YXKO-related"/>
    <property type="match status" value="1"/>
</dbReference>
<dbReference type="Gene3D" id="3.40.1190.20">
    <property type="match status" value="1"/>
</dbReference>
<dbReference type="HAMAP" id="MF_01965">
    <property type="entry name" value="NADHX_dehydratase"/>
    <property type="match status" value="1"/>
</dbReference>
<dbReference type="InterPro" id="IPR000631">
    <property type="entry name" value="CARKD"/>
</dbReference>
<dbReference type="InterPro" id="IPR029056">
    <property type="entry name" value="Ribokinase-like"/>
</dbReference>
<dbReference type="NCBIfam" id="TIGR00196">
    <property type="entry name" value="yjeF_cterm"/>
    <property type="match status" value="1"/>
</dbReference>
<dbReference type="PANTHER" id="PTHR12592:SF0">
    <property type="entry name" value="ATP-DEPENDENT (S)-NAD(P)H-HYDRATE DEHYDRATASE"/>
    <property type="match status" value="1"/>
</dbReference>
<dbReference type="PANTHER" id="PTHR12592">
    <property type="entry name" value="ATP-DEPENDENT (S)-NAD(P)H-HYDRATE DEHYDRATASE FAMILY MEMBER"/>
    <property type="match status" value="1"/>
</dbReference>
<dbReference type="Pfam" id="PF01256">
    <property type="entry name" value="Carb_kinase"/>
    <property type="match status" value="1"/>
</dbReference>
<dbReference type="SUPFAM" id="SSF53613">
    <property type="entry name" value="Ribokinase-like"/>
    <property type="match status" value="1"/>
</dbReference>
<dbReference type="PROSITE" id="PS51383">
    <property type="entry name" value="YJEF_C_3"/>
    <property type="match status" value="1"/>
</dbReference>
<protein>
    <recommendedName>
        <fullName evidence="1">ADP-dependent (S)-NAD(P)H-hydrate dehydratase</fullName>
        <ecNumber evidence="1">4.2.1.136</ecNumber>
    </recommendedName>
    <alternativeName>
        <fullName evidence="1">ADP-dependent NAD(P)HX dehydratase</fullName>
    </alternativeName>
</protein>
<organism>
    <name type="scientific">Haloterrigena turkmenica (strain ATCC 51198 / DSM 5511 / JCM 9101 / NCIMB 13204 / VKM B-1734 / 4k)</name>
    <name type="common">Halococcus turkmenicus</name>
    <dbReference type="NCBI Taxonomy" id="543526"/>
    <lineage>
        <taxon>Archaea</taxon>
        <taxon>Methanobacteriati</taxon>
        <taxon>Methanobacteriota</taxon>
        <taxon>Stenosarchaea group</taxon>
        <taxon>Halobacteria</taxon>
        <taxon>Halobacteriales</taxon>
        <taxon>Natrialbaceae</taxon>
        <taxon>Haloterrigena</taxon>
    </lineage>
</organism>
<comment type="function">
    <text evidence="1">Catalyzes the dehydration of the S-form of NAD(P)HX at the expense of ADP, which is converted to AMP. Together with NAD(P)HX epimerase, which catalyzes the epimerization of the S- and R-forms, the enzyme allows the repair of both epimers of NAD(P)HX, a damaged form of NAD(P)H that is a result of enzymatic or heat-dependent hydration.</text>
</comment>
<comment type="catalytic activity">
    <reaction evidence="1">
        <text>(6S)-NADHX + ADP = AMP + phosphate + NADH + H(+)</text>
        <dbReference type="Rhea" id="RHEA:32223"/>
        <dbReference type="ChEBI" id="CHEBI:15378"/>
        <dbReference type="ChEBI" id="CHEBI:43474"/>
        <dbReference type="ChEBI" id="CHEBI:57945"/>
        <dbReference type="ChEBI" id="CHEBI:64074"/>
        <dbReference type="ChEBI" id="CHEBI:456215"/>
        <dbReference type="ChEBI" id="CHEBI:456216"/>
        <dbReference type="EC" id="4.2.1.136"/>
    </reaction>
</comment>
<comment type="catalytic activity">
    <reaction evidence="1">
        <text>(6S)-NADPHX + ADP = AMP + phosphate + NADPH + H(+)</text>
        <dbReference type="Rhea" id="RHEA:32235"/>
        <dbReference type="ChEBI" id="CHEBI:15378"/>
        <dbReference type="ChEBI" id="CHEBI:43474"/>
        <dbReference type="ChEBI" id="CHEBI:57783"/>
        <dbReference type="ChEBI" id="CHEBI:64076"/>
        <dbReference type="ChEBI" id="CHEBI:456215"/>
        <dbReference type="ChEBI" id="CHEBI:456216"/>
        <dbReference type="EC" id="4.2.1.136"/>
    </reaction>
</comment>
<comment type="cofactor">
    <cofactor evidence="1">
        <name>Mg(2+)</name>
        <dbReference type="ChEBI" id="CHEBI:18420"/>
    </cofactor>
</comment>
<comment type="subunit">
    <text evidence="1">Homotetramer.</text>
</comment>
<comment type="similarity">
    <text evidence="1">Belongs to the NnrD/CARKD family.</text>
</comment>
<name>NNRD_HALTV</name>
<reference key="1">
    <citation type="journal article" date="2010" name="Stand. Genomic Sci.">
        <title>Complete genome sequence of Haloterrigena turkmenica type strain (4k).</title>
        <authorList>
            <person name="Saunders E."/>
            <person name="Tindall B.J."/>
            <person name="Fahnrich R."/>
            <person name="Lapidus A."/>
            <person name="Copeland A."/>
            <person name="Del Rio T.G."/>
            <person name="Lucas S."/>
            <person name="Chen F."/>
            <person name="Tice H."/>
            <person name="Cheng J.F."/>
            <person name="Han C."/>
            <person name="Detter J.C."/>
            <person name="Bruce D."/>
            <person name="Goodwin L."/>
            <person name="Chain P."/>
            <person name="Pitluck S."/>
            <person name="Pati A."/>
            <person name="Ivanova N."/>
            <person name="Mavromatis K."/>
            <person name="Chen A."/>
            <person name="Palaniappan K."/>
            <person name="Land M."/>
            <person name="Hauser L."/>
            <person name="Chang Y.J."/>
            <person name="Jeffries C.D."/>
            <person name="Brettin T."/>
            <person name="Rohde M."/>
            <person name="Goker M."/>
            <person name="Bristow J."/>
            <person name="Eisen J.A."/>
            <person name="Markowitz V."/>
            <person name="Hugenholtz P."/>
            <person name="Klenk H.P."/>
            <person name="Kyrpides N.C."/>
        </authorList>
    </citation>
    <scope>NUCLEOTIDE SEQUENCE [LARGE SCALE GENOMIC DNA]</scope>
    <source>
        <strain>ATCC 51198 / DSM 5511 / JCM 9101 / NCIMB 13204 / VKM B-1734 / 4k</strain>
    </source>
</reference>
<accession>D2RXF6</accession>
<feature type="chain" id="PRO_0000416153" description="ADP-dependent (S)-NAD(P)H-hydrate dehydratase">
    <location>
        <begin position="1"/>
        <end position="257"/>
    </location>
</feature>
<feature type="domain" description="YjeF C-terminal" evidence="1">
    <location>
        <begin position="1"/>
        <end position="257"/>
    </location>
</feature>
<feature type="binding site" evidence="1">
    <location>
        <position position="200"/>
    </location>
    <ligand>
        <name>AMP</name>
        <dbReference type="ChEBI" id="CHEBI:456215"/>
    </ligand>
</feature>
<feature type="binding site" evidence="1">
    <location>
        <position position="201"/>
    </location>
    <ligand>
        <name>(6S)-NADPHX</name>
        <dbReference type="ChEBI" id="CHEBI:64076"/>
    </ligand>
</feature>